<comment type="function">
    <text evidence="1">RNA chaperone that binds small regulatory RNA (sRNAs) and mRNAs to facilitate mRNA translational regulation in response to envelope stress, environmental stress and changes in metabolite concentrations. Also binds with high specificity to tRNAs.</text>
</comment>
<comment type="subunit">
    <text evidence="1">Homohexamer.</text>
</comment>
<comment type="similarity">
    <text evidence="1">Belongs to the Hfq family.</text>
</comment>
<proteinExistence type="inferred from homology"/>
<accession>C1DLQ2</accession>
<name>HFQ_AZOVD</name>
<keyword id="KW-0694">RNA-binding</keyword>
<keyword id="KW-0346">Stress response</keyword>
<reference key="1">
    <citation type="journal article" date="2009" name="J. Bacteriol.">
        <title>Genome sequence of Azotobacter vinelandii, an obligate aerobe specialized to support diverse anaerobic metabolic processes.</title>
        <authorList>
            <person name="Setubal J.C."/>
            <person name="Dos Santos P."/>
            <person name="Goldman B.S."/>
            <person name="Ertesvaag H."/>
            <person name="Espin G."/>
            <person name="Rubio L.M."/>
            <person name="Valla S."/>
            <person name="Almeida N.F."/>
            <person name="Balasubramanian D."/>
            <person name="Cromes L."/>
            <person name="Curatti L."/>
            <person name="Du Z."/>
            <person name="Godsy E."/>
            <person name="Goodner B."/>
            <person name="Hellner-Burris K."/>
            <person name="Hernandez J.A."/>
            <person name="Houmiel K."/>
            <person name="Imperial J."/>
            <person name="Kennedy C."/>
            <person name="Larson T.J."/>
            <person name="Latreille P."/>
            <person name="Ligon L.S."/>
            <person name="Lu J."/>
            <person name="Maerk M."/>
            <person name="Miller N.M."/>
            <person name="Norton S."/>
            <person name="O'Carroll I.P."/>
            <person name="Paulsen I."/>
            <person name="Raulfs E.C."/>
            <person name="Roemer R."/>
            <person name="Rosser J."/>
            <person name="Segura D."/>
            <person name="Slater S."/>
            <person name="Stricklin S.L."/>
            <person name="Studholme D.J."/>
            <person name="Sun J."/>
            <person name="Viana C.J."/>
            <person name="Wallin E."/>
            <person name="Wang B."/>
            <person name="Wheeler C."/>
            <person name="Zhu H."/>
            <person name="Dean D.R."/>
            <person name="Dixon R."/>
            <person name="Wood D."/>
        </authorList>
    </citation>
    <scope>NUCLEOTIDE SEQUENCE [LARGE SCALE GENOMIC DNA]</scope>
    <source>
        <strain>DJ / ATCC BAA-1303</strain>
    </source>
</reference>
<sequence length="84" mass="9348">MSKGHSLQDPYLNTLRKERVPVSIYLVNGIKLQGQIESFDQFVILLKNTVSQMVYKHAISTVVPSRPVRLPTASEGEQPEPGNA</sequence>
<evidence type="ECO:0000255" key="1">
    <source>
        <dbReference type="HAMAP-Rule" id="MF_00436"/>
    </source>
</evidence>
<evidence type="ECO:0000255" key="2">
    <source>
        <dbReference type="PROSITE-ProRule" id="PRU01346"/>
    </source>
</evidence>
<organism>
    <name type="scientific">Azotobacter vinelandii (strain DJ / ATCC BAA-1303)</name>
    <dbReference type="NCBI Taxonomy" id="322710"/>
    <lineage>
        <taxon>Bacteria</taxon>
        <taxon>Pseudomonadati</taxon>
        <taxon>Pseudomonadota</taxon>
        <taxon>Gammaproteobacteria</taxon>
        <taxon>Pseudomonadales</taxon>
        <taxon>Pseudomonadaceae</taxon>
        <taxon>Azotobacter</taxon>
    </lineage>
</organism>
<gene>
    <name evidence="1" type="primary">hfq</name>
    <name type="ordered locus">Avin_07540</name>
</gene>
<feature type="chain" id="PRO_1000206097" description="RNA-binding protein Hfq">
    <location>
        <begin position="1"/>
        <end position="84"/>
    </location>
</feature>
<feature type="domain" description="Sm" evidence="2">
    <location>
        <begin position="9"/>
        <end position="68"/>
    </location>
</feature>
<protein>
    <recommendedName>
        <fullName evidence="1">RNA-binding protein Hfq</fullName>
    </recommendedName>
</protein>
<dbReference type="EMBL" id="CP001157">
    <property type="protein sequence ID" value="ACO77000.1"/>
    <property type="molecule type" value="Genomic_DNA"/>
</dbReference>
<dbReference type="RefSeq" id="WP_012699425.1">
    <property type="nucleotide sequence ID" value="NZ_CP144736.1"/>
</dbReference>
<dbReference type="SMR" id="C1DLQ2"/>
<dbReference type="STRING" id="322710.Avin_07540"/>
<dbReference type="EnsemblBacteria" id="ACO77000">
    <property type="protein sequence ID" value="ACO77000"/>
    <property type="gene ID" value="Avin_07540"/>
</dbReference>
<dbReference type="GeneID" id="88184150"/>
<dbReference type="KEGG" id="avn:Avin_07540"/>
<dbReference type="eggNOG" id="COG1923">
    <property type="taxonomic scope" value="Bacteria"/>
</dbReference>
<dbReference type="HOGENOM" id="CLU_113688_2_2_6"/>
<dbReference type="OrthoDB" id="9799751at2"/>
<dbReference type="Proteomes" id="UP000002424">
    <property type="component" value="Chromosome"/>
</dbReference>
<dbReference type="GO" id="GO:0005829">
    <property type="term" value="C:cytosol"/>
    <property type="evidence" value="ECO:0007669"/>
    <property type="project" value="TreeGrafter"/>
</dbReference>
<dbReference type="GO" id="GO:0003723">
    <property type="term" value="F:RNA binding"/>
    <property type="evidence" value="ECO:0007669"/>
    <property type="project" value="UniProtKB-UniRule"/>
</dbReference>
<dbReference type="GO" id="GO:0006355">
    <property type="term" value="P:regulation of DNA-templated transcription"/>
    <property type="evidence" value="ECO:0007669"/>
    <property type="project" value="InterPro"/>
</dbReference>
<dbReference type="GO" id="GO:0043487">
    <property type="term" value="P:regulation of RNA stability"/>
    <property type="evidence" value="ECO:0007669"/>
    <property type="project" value="TreeGrafter"/>
</dbReference>
<dbReference type="GO" id="GO:0045974">
    <property type="term" value="P:regulation of translation, ncRNA-mediated"/>
    <property type="evidence" value="ECO:0007669"/>
    <property type="project" value="TreeGrafter"/>
</dbReference>
<dbReference type="CDD" id="cd01716">
    <property type="entry name" value="Hfq"/>
    <property type="match status" value="1"/>
</dbReference>
<dbReference type="FunFam" id="2.30.30.100:FF:000001">
    <property type="entry name" value="RNA-binding protein Hfq"/>
    <property type="match status" value="1"/>
</dbReference>
<dbReference type="Gene3D" id="2.30.30.100">
    <property type="match status" value="1"/>
</dbReference>
<dbReference type="HAMAP" id="MF_00436">
    <property type="entry name" value="Hfq"/>
    <property type="match status" value="1"/>
</dbReference>
<dbReference type="InterPro" id="IPR005001">
    <property type="entry name" value="Hfq"/>
</dbReference>
<dbReference type="InterPro" id="IPR010920">
    <property type="entry name" value="LSM_dom_sf"/>
</dbReference>
<dbReference type="InterPro" id="IPR047575">
    <property type="entry name" value="Sm"/>
</dbReference>
<dbReference type="NCBIfam" id="TIGR02383">
    <property type="entry name" value="Hfq"/>
    <property type="match status" value="1"/>
</dbReference>
<dbReference type="NCBIfam" id="NF001602">
    <property type="entry name" value="PRK00395.1"/>
    <property type="match status" value="1"/>
</dbReference>
<dbReference type="PANTHER" id="PTHR34772">
    <property type="entry name" value="RNA-BINDING PROTEIN HFQ"/>
    <property type="match status" value="1"/>
</dbReference>
<dbReference type="PANTHER" id="PTHR34772:SF1">
    <property type="entry name" value="RNA-BINDING PROTEIN HFQ"/>
    <property type="match status" value="1"/>
</dbReference>
<dbReference type="Pfam" id="PF17209">
    <property type="entry name" value="Hfq"/>
    <property type="match status" value="1"/>
</dbReference>
<dbReference type="SUPFAM" id="SSF50182">
    <property type="entry name" value="Sm-like ribonucleoproteins"/>
    <property type="match status" value="1"/>
</dbReference>
<dbReference type="PROSITE" id="PS52002">
    <property type="entry name" value="SM"/>
    <property type="match status" value="1"/>
</dbReference>